<gene>
    <name type="ordered locus">HI_1119</name>
</gene>
<feature type="chain" id="PRO_0000078004" description="Uncharacterized protein HI_1119">
    <location>
        <begin position="1"/>
        <end position="292"/>
    </location>
</feature>
<protein>
    <recommendedName>
        <fullName>Uncharacterized protein HI_1119</fullName>
    </recommendedName>
</protein>
<accession>Q57273</accession>
<accession>O05045</accession>
<proteinExistence type="predicted"/>
<keyword id="KW-1185">Reference proteome</keyword>
<name>Y1119_HAEIN</name>
<reference key="1">
    <citation type="journal article" date="1995" name="Science">
        <title>Whole-genome random sequencing and assembly of Haemophilus influenzae Rd.</title>
        <authorList>
            <person name="Fleischmann R.D."/>
            <person name="Adams M.D."/>
            <person name="White O."/>
            <person name="Clayton R.A."/>
            <person name="Kirkness E.F."/>
            <person name="Kerlavage A.R."/>
            <person name="Bult C.J."/>
            <person name="Tomb J.-F."/>
            <person name="Dougherty B.A."/>
            <person name="Merrick J.M."/>
            <person name="McKenney K."/>
            <person name="Sutton G.G."/>
            <person name="FitzHugh W."/>
            <person name="Fields C.A."/>
            <person name="Gocayne J.D."/>
            <person name="Scott J.D."/>
            <person name="Shirley R."/>
            <person name="Liu L.-I."/>
            <person name="Glodek A."/>
            <person name="Kelley J.M."/>
            <person name="Weidman J.F."/>
            <person name="Phillips C.A."/>
            <person name="Spriggs T."/>
            <person name="Hedblom E."/>
            <person name="Cotton M.D."/>
            <person name="Utterback T.R."/>
            <person name="Hanna M.C."/>
            <person name="Nguyen D.T."/>
            <person name="Saudek D.M."/>
            <person name="Brandon R.C."/>
            <person name="Fine L.D."/>
            <person name="Fritchman J.L."/>
            <person name="Fuhrmann J.L."/>
            <person name="Geoghagen N.S.M."/>
            <person name="Gnehm C.L."/>
            <person name="McDonald L.A."/>
            <person name="Small K.V."/>
            <person name="Fraser C.M."/>
            <person name="Smith H.O."/>
            <person name="Venter J.C."/>
        </authorList>
    </citation>
    <scope>NUCLEOTIDE SEQUENCE [LARGE SCALE GENOMIC DNA]</scope>
    <source>
        <strain>ATCC 51907 / DSM 11121 / KW20 / Rd</strain>
    </source>
</reference>
<sequence>MAIQMTTKTTYQWPQSKDIYPYRPGRFDAPKHWRYNLRSFLNRGSIRRFEQFINQHPFLIDIFNTHLDYSYPVACRFLDKRFNASQRFHAVCENLLFLPEKLTALSTPLWEKPLSFGEVIPDFEMTLSMTTHQPMEGYWVLELWHKPRNELVYLLTFAKLGDALLIAVVQGPNFEGSKEMVKQLTKLCHGLRPAYLMVETMKSLTKILGYNKLLGIPQKYQNKSRFIQSKQYTVDYDAIFGESGGELKDYWELPLEMDRNLDDIPSKKRSMYRKRYAMLDDLAKVIEEKLGL</sequence>
<organism>
    <name type="scientific">Haemophilus influenzae (strain ATCC 51907 / DSM 11121 / KW20 / Rd)</name>
    <dbReference type="NCBI Taxonomy" id="71421"/>
    <lineage>
        <taxon>Bacteria</taxon>
        <taxon>Pseudomonadati</taxon>
        <taxon>Pseudomonadota</taxon>
        <taxon>Gammaproteobacteria</taxon>
        <taxon>Pasteurellales</taxon>
        <taxon>Pasteurellaceae</taxon>
        <taxon>Haemophilus</taxon>
    </lineage>
</organism>
<dbReference type="EMBL" id="L42023">
    <property type="protein sequence ID" value="AAC22773.1"/>
    <property type="molecule type" value="Genomic_DNA"/>
</dbReference>
<dbReference type="PIR" id="A64184">
    <property type="entry name" value="A64184"/>
</dbReference>
<dbReference type="RefSeq" id="NP_439276.1">
    <property type="nucleotide sequence ID" value="NC_000907.1"/>
</dbReference>
<dbReference type="STRING" id="71421.HI_1119"/>
<dbReference type="DNASU" id="950085"/>
<dbReference type="EnsemblBacteria" id="AAC22773">
    <property type="protein sequence ID" value="AAC22773"/>
    <property type="gene ID" value="HI_1119"/>
</dbReference>
<dbReference type="KEGG" id="hin:HI_1119"/>
<dbReference type="PATRIC" id="fig|71421.8.peg.1168"/>
<dbReference type="eggNOG" id="COG2990">
    <property type="taxonomic scope" value="Bacteria"/>
</dbReference>
<dbReference type="HOGENOM" id="CLU_065818_3_0_6"/>
<dbReference type="OrthoDB" id="6835762at2"/>
<dbReference type="PhylomeDB" id="Q57273"/>
<dbReference type="BioCyc" id="HINF71421:G1GJ1-1154-MONOMER"/>
<dbReference type="Proteomes" id="UP000000579">
    <property type="component" value="Chromosome"/>
</dbReference>
<dbReference type="GO" id="GO:0006974">
    <property type="term" value="P:DNA damage response"/>
    <property type="evidence" value="ECO:0000318"/>
    <property type="project" value="GO_Central"/>
</dbReference>
<dbReference type="InterPro" id="IPR007488">
    <property type="entry name" value="DUF535"/>
</dbReference>
<dbReference type="PANTHER" id="PTHR38785">
    <property type="entry name" value="HOMOLOG OF VIRK"/>
    <property type="match status" value="1"/>
</dbReference>
<dbReference type="PANTHER" id="PTHR38785:SF1">
    <property type="entry name" value="HOMOLOG OF VIRK"/>
    <property type="match status" value="1"/>
</dbReference>
<dbReference type="Pfam" id="PF04393">
    <property type="entry name" value="DUF535"/>
    <property type="match status" value="1"/>
</dbReference>